<reference key="1">
    <citation type="journal article" date="2005" name="BMC Genomics">
        <title>Characterization of 954 bovine full-CDS cDNA sequences.</title>
        <authorList>
            <person name="Harhay G.P."/>
            <person name="Sonstegard T.S."/>
            <person name="Keele J.W."/>
            <person name="Heaton M.P."/>
            <person name="Clawson M.L."/>
            <person name="Snelling W.M."/>
            <person name="Wiedmann R.T."/>
            <person name="Van Tassell C.P."/>
            <person name="Smith T.P.L."/>
        </authorList>
    </citation>
    <scope>NUCLEOTIDE SEQUENCE [LARGE SCALE MRNA]</scope>
</reference>
<sequence length="328" mass="35881">MTTLQIVLQGPGPWGFRLVGGKDFEQPLAISRVTPGSKAAIGNLCVGDVITAIDGENTSNMTHLEAQNKIKGCTDNMTLTVARSEQKIWSPLVTEEGKRHPYKMNLASEPQEALHIGSAHNRSAVPFTASPAFSSAPRVITNQYNNPAGLYSSENISSFNNALESKTAASGQENGRALDHSQLPSGLVIDKESEVYKMLQEKQELNEPPKQSTSFLVLQEILESEEKGDPNKPSGFRSVKAPVTKVAASIGNAQKLPMCDKCGTGIVGVFVKLRERHRHPECYVCTDCGTNLKQKGHFFVEDQIYCEKHARERVTPPEGYDVITVFPK</sequence>
<gene>
    <name type="primary">PDLIM1</name>
</gene>
<feature type="initiator methionine" description="Removed" evidence="2">
    <location>
        <position position="1"/>
    </location>
</feature>
<feature type="chain" id="PRO_0000075858" description="PDZ and LIM domain protein 1">
    <location>
        <begin position="2"/>
        <end position="328"/>
    </location>
</feature>
<feature type="domain" description="PDZ" evidence="5">
    <location>
        <begin position="3"/>
        <end position="85"/>
    </location>
</feature>
<feature type="domain" description="LIM zinc-binding" evidence="4">
    <location>
        <begin position="257"/>
        <end position="316"/>
    </location>
</feature>
<feature type="binding site" evidence="1">
    <location>
        <position position="259"/>
    </location>
    <ligand>
        <name>Zn(2+)</name>
        <dbReference type="ChEBI" id="CHEBI:29105"/>
        <label>1</label>
    </ligand>
</feature>
<feature type="binding site" evidence="1">
    <location>
        <position position="262"/>
    </location>
    <ligand>
        <name>Zn(2+)</name>
        <dbReference type="ChEBI" id="CHEBI:29105"/>
        <label>1</label>
    </ligand>
</feature>
<feature type="binding site" evidence="1">
    <location>
        <position position="279"/>
    </location>
    <ligand>
        <name>Zn(2+)</name>
        <dbReference type="ChEBI" id="CHEBI:29105"/>
        <label>1</label>
    </ligand>
</feature>
<feature type="binding site" evidence="1">
    <location>
        <position position="282"/>
    </location>
    <ligand>
        <name>Zn(2+)</name>
        <dbReference type="ChEBI" id="CHEBI:29105"/>
        <label>1</label>
    </ligand>
</feature>
<feature type="binding site" evidence="1">
    <location>
        <position position="285"/>
    </location>
    <ligand>
        <name>Zn(2+)</name>
        <dbReference type="ChEBI" id="CHEBI:29105"/>
        <label>2</label>
    </ligand>
</feature>
<feature type="binding site" evidence="1">
    <location>
        <position position="288"/>
    </location>
    <ligand>
        <name>Zn(2+)</name>
        <dbReference type="ChEBI" id="CHEBI:29105"/>
        <label>2</label>
    </ligand>
</feature>
<feature type="binding site" evidence="1">
    <location>
        <position position="306"/>
    </location>
    <ligand>
        <name>Zn(2+)</name>
        <dbReference type="ChEBI" id="CHEBI:29105"/>
        <label>2</label>
    </ligand>
</feature>
<feature type="binding site" evidence="1">
    <location>
        <position position="309"/>
    </location>
    <ligand>
        <name>Zn(2+)</name>
        <dbReference type="ChEBI" id="CHEBI:29105"/>
        <label>2</label>
    </ligand>
</feature>
<feature type="modified residue" description="N-acetylthreonine" evidence="2">
    <location>
        <position position="2"/>
    </location>
</feature>
<feature type="modified residue" description="Phosphoserine" evidence="2">
    <location>
        <position position="90"/>
    </location>
</feature>
<feature type="modified residue" description="Phosphoserine" evidence="2">
    <location>
        <position position="130"/>
    </location>
</feature>
<feature type="modified residue" description="Phosphotyrosine" evidence="2">
    <location>
        <position position="144"/>
    </location>
</feature>
<feature type="modified residue" description="Phosphothreonine" evidence="2">
    <location>
        <position position="315"/>
    </location>
</feature>
<feature type="modified residue" description="Phosphotyrosine" evidence="2">
    <location>
        <position position="320"/>
    </location>
</feature>
<dbReference type="EMBL" id="BT020979">
    <property type="protein sequence ID" value="AAX08996.1"/>
    <property type="molecule type" value="mRNA"/>
</dbReference>
<dbReference type="RefSeq" id="NP_001030532.1">
    <property type="nucleotide sequence ID" value="NM_001035455.1"/>
</dbReference>
<dbReference type="SMR" id="Q5E9E1"/>
<dbReference type="FunCoup" id="Q5E9E1">
    <property type="interactions" value="329"/>
</dbReference>
<dbReference type="STRING" id="9913.ENSBTAP00000014850"/>
<dbReference type="PaxDb" id="9913-ENSBTAP00000014850"/>
<dbReference type="PeptideAtlas" id="Q5E9E1"/>
<dbReference type="GeneID" id="614675"/>
<dbReference type="KEGG" id="bta:614675"/>
<dbReference type="CTD" id="9124"/>
<dbReference type="eggNOG" id="KOG1703">
    <property type="taxonomic scope" value="Eukaryota"/>
</dbReference>
<dbReference type="InParanoid" id="Q5E9E1"/>
<dbReference type="OrthoDB" id="1293114at2759"/>
<dbReference type="Proteomes" id="UP000009136">
    <property type="component" value="Unplaced"/>
</dbReference>
<dbReference type="GO" id="GO:0005912">
    <property type="term" value="C:adherens junction"/>
    <property type="evidence" value="ECO:0000318"/>
    <property type="project" value="GO_Central"/>
</dbReference>
<dbReference type="GO" id="GO:0031941">
    <property type="term" value="C:filamentous actin"/>
    <property type="evidence" value="ECO:0000318"/>
    <property type="project" value="GO_Central"/>
</dbReference>
<dbReference type="GO" id="GO:0001725">
    <property type="term" value="C:stress fiber"/>
    <property type="evidence" value="ECO:0000318"/>
    <property type="project" value="GO_Central"/>
</dbReference>
<dbReference type="GO" id="GO:0005667">
    <property type="term" value="C:transcription regulator complex"/>
    <property type="evidence" value="ECO:0000250"/>
    <property type="project" value="AgBase"/>
</dbReference>
<dbReference type="GO" id="GO:0030018">
    <property type="term" value="C:Z disc"/>
    <property type="evidence" value="ECO:0000318"/>
    <property type="project" value="GO_Central"/>
</dbReference>
<dbReference type="GO" id="GO:0003779">
    <property type="term" value="F:actin binding"/>
    <property type="evidence" value="ECO:0000318"/>
    <property type="project" value="GO_Central"/>
</dbReference>
<dbReference type="GO" id="GO:0046872">
    <property type="term" value="F:metal ion binding"/>
    <property type="evidence" value="ECO:0007669"/>
    <property type="project" value="UniProtKB-KW"/>
</dbReference>
<dbReference type="GO" id="GO:0051371">
    <property type="term" value="F:muscle alpha-actinin binding"/>
    <property type="evidence" value="ECO:0000318"/>
    <property type="project" value="GO_Central"/>
</dbReference>
<dbReference type="GO" id="GO:0003713">
    <property type="term" value="F:transcription coactivator activity"/>
    <property type="evidence" value="ECO:0000250"/>
    <property type="project" value="AgBase"/>
</dbReference>
<dbReference type="GO" id="GO:0030036">
    <property type="term" value="P:actin cytoskeleton organization"/>
    <property type="evidence" value="ECO:0000318"/>
    <property type="project" value="GO_Central"/>
</dbReference>
<dbReference type="GO" id="GO:0007507">
    <property type="term" value="P:heart development"/>
    <property type="evidence" value="ECO:0000318"/>
    <property type="project" value="GO_Central"/>
</dbReference>
<dbReference type="GO" id="GO:0061061">
    <property type="term" value="P:muscle structure development"/>
    <property type="evidence" value="ECO:0000318"/>
    <property type="project" value="GO_Central"/>
</dbReference>
<dbReference type="GO" id="GO:0006355">
    <property type="term" value="P:regulation of DNA-templated transcription"/>
    <property type="evidence" value="ECO:0000250"/>
    <property type="project" value="AgBase"/>
</dbReference>
<dbReference type="CDD" id="cd09448">
    <property type="entry name" value="LIM_CLP36"/>
    <property type="match status" value="1"/>
</dbReference>
<dbReference type="CDD" id="cd06753">
    <property type="entry name" value="PDZ_PDLIM-like"/>
    <property type="match status" value="1"/>
</dbReference>
<dbReference type="FunFam" id="2.10.110.10:FF:000026">
    <property type="entry name" value="PDZ and LIM domain protein 3"/>
    <property type="match status" value="1"/>
</dbReference>
<dbReference type="FunFam" id="2.30.42.10:FF:000055">
    <property type="entry name" value="PDZ and LIM domain protein 3"/>
    <property type="match status" value="1"/>
</dbReference>
<dbReference type="Gene3D" id="2.30.42.10">
    <property type="match status" value="1"/>
</dbReference>
<dbReference type="Gene3D" id="2.10.110.10">
    <property type="entry name" value="Cysteine Rich Protein"/>
    <property type="match status" value="1"/>
</dbReference>
<dbReference type="InterPro" id="IPR031847">
    <property type="entry name" value="PDLI1-4/Zasp-like_mid"/>
</dbReference>
<dbReference type="InterPro" id="IPR028537">
    <property type="entry name" value="PDLIM1_LIM"/>
</dbReference>
<dbReference type="InterPro" id="IPR001478">
    <property type="entry name" value="PDZ"/>
</dbReference>
<dbReference type="InterPro" id="IPR050604">
    <property type="entry name" value="PDZ-LIM_domain"/>
</dbReference>
<dbReference type="InterPro" id="IPR036034">
    <property type="entry name" value="PDZ_sf"/>
</dbReference>
<dbReference type="InterPro" id="IPR006643">
    <property type="entry name" value="Zasp-like_motif"/>
</dbReference>
<dbReference type="InterPro" id="IPR001781">
    <property type="entry name" value="Znf_LIM"/>
</dbReference>
<dbReference type="PANTHER" id="PTHR24214:SF5">
    <property type="entry name" value="PDZ AND LIM DOMAIN PROTEIN 1"/>
    <property type="match status" value="1"/>
</dbReference>
<dbReference type="PANTHER" id="PTHR24214">
    <property type="entry name" value="PDZ AND LIM DOMAIN PROTEIN ZASP"/>
    <property type="match status" value="1"/>
</dbReference>
<dbReference type="Pfam" id="PF15936">
    <property type="entry name" value="DUF4749"/>
    <property type="match status" value="1"/>
</dbReference>
<dbReference type="Pfam" id="PF00412">
    <property type="entry name" value="LIM"/>
    <property type="match status" value="1"/>
</dbReference>
<dbReference type="Pfam" id="PF00595">
    <property type="entry name" value="PDZ"/>
    <property type="match status" value="1"/>
</dbReference>
<dbReference type="SMART" id="SM00132">
    <property type="entry name" value="LIM"/>
    <property type="match status" value="1"/>
</dbReference>
<dbReference type="SMART" id="SM00228">
    <property type="entry name" value="PDZ"/>
    <property type="match status" value="1"/>
</dbReference>
<dbReference type="SMART" id="SM00735">
    <property type="entry name" value="ZM"/>
    <property type="match status" value="1"/>
</dbReference>
<dbReference type="SUPFAM" id="SSF57716">
    <property type="entry name" value="Glucocorticoid receptor-like (DNA-binding domain)"/>
    <property type="match status" value="2"/>
</dbReference>
<dbReference type="SUPFAM" id="SSF50156">
    <property type="entry name" value="PDZ domain-like"/>
    <property type="match status" value="1"/>
</dbReference>
<dbReference type="PROSITE" id="PS00478">
    <property type="entry name" value="LIM_DOMAIN_1"/>
    <property type="match status" value="1"/>
</dbReference>
<dbReference type="PROSITE" id="PS50023">
    <property type="entry name" value="LIM_DOMAIN_2"/>
    <property type="match status" value="1"/>
</dbReference>
<dbReference type="PROSITE" id="PS50106">
    <property type="entry name" value="PDZ"/>
    <property type="match status" value="1"/>
</dbReference>
<comment type="function">
    <text evidence="2 3">Cytoskeletal protein that may act as an adapter that brings other proteins (like kinases) to the cytoskeleton (By similarity). Involved in assembly, disassembly and directioning of stress fibers in fibroblasts. Required for the localization of ACTN1 and PALLD to stress fibers. Required for cell migration and in maintaining cell polarity of fibroblasts (By similarity).</text>
</comment>
<comment type="subunit">
    <text evidence="2 3">Interacts with ACTN1, ACTN2 and ACTN4 (By similarity). Interacts with PDLIM4 (By similarity).</text>
</comment>
<comment type="subcellular location">
    <subcellularLocation>
        <location evidence="2">Cytoplasm</location>
    </subcellularLocation>
    <subcellularLocation>
        <location evidence="2">Cytoplasm</location>
        <location evidence="2">Cytoskeleton</location>
    </subcellularLocation>
    <subcellularLocation>
        <location evidence="2">Cytoplasm</location>
        <location evidence="2">Myofibril</location>
        <location evidence="2">Sarcomere</location>
        <location evidence="2">Z line</location>
    </subcellularLocation>
    <text evidence="2">Associates with the actin stress fibers.</text>
</comment>
<organism>
    <name type="scientific">Bos taurus</name>
    <name type="common">Bovine</name>
    <dbReference type="NCBI Taxonomy" id="9913"/>
    <lineage>
        <taxon>Eukaryota</taxon>
        <taxon>Metazoa</taxon>
        <taxon>Chordata</taxon>
        <taxon>Craniata</taxon>
        <taxon>Vertebrata</taxon>
        <taxon>Euteleostomi</taxon>
        <taxon>Mammalia</taxon>
        <taxon>Eutheria</taxon>
        <taxon>Laurasiatheria</taxon>
        <taxon>Artiodactyla</taxon>
        <taxon>Ruminantia</taxon>
        <taxon>Pecora</taxon>
        <taxon>Bovidae</taxon>
        <taxon>Bovinae</taxon>
        <taxon>Bos</taxon>
    </lineage>
</organism>
<keyword id="KW-0007">Acetylation</keyword>
<keyword id="KW-0963">Cytoplasm</keyword>
<keyword id="KW-0206">Cytoskeleton</keyword>
<keyword id="KW-0440">LIM domain</keyword>
<keyword id="KW-0479">Metal-binding</keyword>
<keyword id="KW-0597">Phosphoprotein</keyword>
<keyword id="KW-1185">Reference proteome</keyword>
<keyword id="KW-0862">Zinc</keyword>
<accession>Q5E9E1</accession>
<name>PDLI1_BOVIN</name>
<evidence type="ECO:0000250" key="1"/>
<evidence type="ECO:0000250" key="2">
    <source>
        <dbReference type="UniProtKB" id="O00151"/>
    </source>
</evidence>
<evidence type="ECO:0000250" key="3">
    <source>
        <dbReference type="UniProtKB" id="P52944"/>
    </source>
</evidence>
<evidence type="ECO:0000255" key="4">
    <source>
        <dbReference type="PROSITE-ProRule" id="PRU00125"/>
    </source>
</evidence>
<evidence type="ECO:0000255" key="5">
    <source>
        <dbReference type="PROSITE-ProRule" id="PRU00143"/>
    </source>
</evidence>
<protein>
    <recommendedName>
        <fullName>PDZ and LIM domain protein 1</fullName>
    </recommendedName>
    <alternativeName>
        <fullName>Elfin</fullName>
    </alternativeName>
</protein>
<proteinExistence type="evidence at transcript level"/>